<proteinExistence type="evidence at transcript level"/>
<keyword id="KW-0489">Methyltransferase</keyword>
<keyword id="KW-0597">Phosphoprotein</keyword>
<keyword id="KW-1185">Reference proteome</keyword>
<keyword id="KW-0949">S-adenosyl-L-methionine</keyword>
<keyword id="KW-0808">Transferase</keyword>
<keyword id="KW-0819">tRNA processing</keyword>
<evidence type="ECO:0000250" key="1"/>
<evidence type="ECO:0000250" key="2">
    <source>
        <dbReference type="UniProtKB" id="Q8BSA9"/>
    </source>
</evidence>
<evidence type="ECO:0000256" key="3">
    <source>
        <dbReference type="SAM" id="MobiDB-lite"/>
    </source>
</evidence>
<evidence type="ECO:0000305" key="4"/>
<protein>
    <recommendedName>
        <fullName>tRNA wybutosine-synthesizing protein 3 homolog</fullName>
        <shortName>tRNA-yW-synthesizing protein 3</shortName>
        <ecNumber>2.1.1.282</ecNumber>
    </recommendedName>
    <alternativeName>
        <fullName>tRNA(Phe) 7-((3-amino-3-carboxypropyl)-4-demethylwyosine(37)-N(4))-methyltransferase</fullName>
    </alternativeName>
</protein>
<organism>
    <name type="scientific">Bos taurus</name>
    <name type="common">Bovine</name>
    <dbReference type="NCBI Taxonomy" id="9913"/>
    <lineage>
        <taxon>Eukaryota</taxon>
        <taxon>Metazoa</taxon>
        <taxon>Chordata</taxon>
        <taxon>Craniata</taxon>
        <taxon>Vertebrata</taxon>
        <taxon>Euteleostomi</taxon>
        <taxon>Mammalia</taxon>
        <taxon>Eutheria</taxon>
        <taxon>Laurasiatheria</taxon>
        <taxon>Artiodactyla</taxon>
        <taxon>Ruminantia</taxon>
        <taxon>Pecora</taxon>
        <taxon>Bovidae</taxon>
        <taxon>Bovinae</taxon>
        <taxon>Bos</taxon>
    </lineage>
</organism>
<gene>
    <name type="primary">TYW3</name>
</gene>
<sequence length="258" mass="29303">MDLSAEFKRWKAQCLSKADLSRKGSVDEDVLEIVQLLNGQEQFFTTSSCAGRIILLDRSVNGSEVQKQNCCWLLVTHKACVKDDVIVALQKAKGDAILKFEPLVLHVQCRQLQDAQILHSVAIDSGFRNSGITVGKRGKTMLAVRSTHGLEVPLSHQGKLMVTEEYINFLLKIANQKMEENKKRIERFYHCLQHALEKETVSTTSQPKEKVNTSYIRKKKRNPGKARGKRVNEEHDKELENNDHDDPGISDTIFPEDY</sequence>
<comment type="function">
    <text evidence="1">Probable S-adenosyl-L-methionine-dependent methyltransferase that acts as a component of the wybutosine biosynthesis pathway. Wybutosine is a hyper modified guanosine with a tricyclic base found at the 3'-position adjacent to the anticodon of eukaryotic phenylalanine tRNA (By similarity).</text>
</comment>
<comment type="catalytic activity">
    <reaction>
        <text>4-demethyl-7-[(3S)-3-amino-3-carboxypropyl]wyosine(37) in tRNA(Phe) + S-adenosyl-L-methionine = 7-[(3S)-3-amino-3-carboxypropyl]wyosine(37) in tRNA(Phe) + S-adenosyl-L-homocysteine + H(+)</text>
        <dbReference type="Rhea" id="RHEA:36635"/>
        <dbReference type="Rhea" id="RHEA-COMP:10378"/>
        <dbReference type="Rhea" id="RHEA-COMP:10379"/>
        <dbReference type="ChEBI" id="CHEBI:15378"/>
        <dbReference type="ChEBI" id="CHEBI:57856"/>
        <dbReference type="ChEBI" id="CHEBI:59789"/>
        <dbReference type="ChEBI" id="CHEBI:73543"/>
        <dbReference type="ChEBI" id="CHEBI:73550"/>
        <dbReference type="EC" id="2.1.1.282"/>
    </reaction>
</comment>
<comment type="pathway">
    <text>tRNA modification; wybutosine-tRNA(Phe) biosynthesis.</text>
</comment>
<comment type="similarity">
    <text evidence="4">Belongs to the TYW3 family.</text>
</comment>
<comment type="sequence caution" evidence="4">
    <conflict type="frameshift">
        <sequence resource="EMBL-CDS" id="AAI14026"/>
    </conflict>
</comment>
<accession>Q5E9U4</accession>
<accession>Q24K18</accession>
<dbReference type="EC" id="2.1.1.282"/>
<dbReference type="EMBL" id="BT020826">
    <property type="protein sequence ID" value="AAX08843.1"/>
    <property type="molecule type" value="mRNA"/>
</dbReference>
<dbReference type="EMBL" id="BC114025">
    <property type="protein sequence ID" value="AAI14026.1"/>
    <property type="status" value="ALT_FRAME"/>
    <property type="molecule type" value="mRNA"/>
</dbReference>
<dbReference type="RefSeq" id="NP_001015620.1">
    <property type="nucleotide sequence ID" value="NM_001015620.1"/>
</dbReference>
<dbReference type="SMR" id="Q5E9U4"/>
<dbReference type="FunCoup" id="Q5E9U4">
    <property type="interactions" value="1319"/>
</dbReference>
<dbReference type="STRING" id="9913.ENSBTAP00000006849"/>
<dbReference type="PaxDb" id="9913-ENSBTAP00000006849"/>
<dbReference type="Ensembl" id="ENSBTAT00000006849.6">
    <property type="protein sequence ID" value="ENSBTAP00000006849.4"/>
    <property type="gene ID" value="ENSBTAG00000005196.6"/>
</dbReference>
<dbReference type="GeneID" id="519731"/>
<dbReference type="KEGG" id="bta:519731"/>
<dbReference type="CTD" id="127253"/>
<dbReference type="VEuPathDB" id="HostDB:ENSBTAG00000005196"/>
<dbReference type="VGNC" id="VGNC:36554">
    <property type="gene designation" value="TYW3"/>
</dbReference>
<dbReference type="eggNOG" id="KOG1228">
    <property type="taxonomic scope" value="Eukaryota"/>
</dbReference>
<dbReference type="GeneTree" id="ENSGT00940000153304"/>
<dbReference type="HOGENOM" id="CLU_047426_1_1_1"/>
<dbReference type="InParanoid" id="Q5E9U4"/>
<dbReference type="OMA" id="TWLYVSH"/>
<dbReference type="OrthoDB" id="263283at2759"/>
<dbReference type="TreeFam" id="TF329327"/>
<dbReference type="UniPathway" id="UPA00375"/>
<dbReference type="Proteomes" id="UP000009136">
    <property type="component" value="Chromosome 3"/>
</dbReference>
<dbReference type="Bgee" id="ENSBTAG00000005196">
    <property type="expression patterns" value="Expressed in tongue muscle and 105 other cell types or tissues"/>
</dbReference>
<dbReference type="GO" id="GO:0005737">
    <property type="term" value="C:cytoplasm"/>
    <property type="evidence" value="ECO:0000318"/>
    <property type="project" value="GO_Central"/>
</dbReference>
<dbReference type="GO" id="GO:0008175">
    <property type="term" value="F:tRNA methyltransferase activity"/>
    <property type="evidence" value="ECO:0000318"/>
    <property type="project" value="GO_Central"/>
</dbReference>
<dbReference type="GO" id="GO:0030488">
    <property type="term" value="P:tRNA methylation"/>
    <property type="evidence" value="ECO:0000318"/>
    <property type="project" value="GO_Central"/>
</dbReference>
<dbReference type="GO" id="GO:0031591">
    <property type="term" value="P:wybutosine biosynthetic process"/>
    <property type="evidence" value="ECO:0000318"/>
    <property type="project" value="GO_Central"/>
</dbReference>
<dbReference type="FunFam" id="3.30.1960.10:FF:000001">
    <property type="entry name" value="tRNA wybutosine-synthesizing protein 3 homolog"/>
    <property type="match status" value="1"/>
</dbReference>
<dbReference type="Gene3D" id="3.30.1960.10">
    <property type="entry name" value="tRNA wybutosine-synthesizing-like"/>
    <property type="match status" value="1"/>
</dbReference>
<dbReference type="InterPro" id="IPR003827">
    <property type="entry name" value="tRNA_yW-synthesising"/>
</dbReference>
<dbReference type="InterPro" id="IPR036602">
    <property type="entry name" value="tRNA_yW-synthesising-like_sf"/>
</dbReference>
<dbReference type="PANTHER" id="PTHR48418">
    <property type="entry name" value="TRNA WYBUTOSINE-SYNTHESIZING PROTEIN 3"/>
    <property type="match status" value="1"/>
</dbReference>
<dbReference type="PANTHER" id="PTHR48418:SF1">
    <property type="entry name" value="TRNA WYBUTOSINE-SYNTHESIZING PROTEIN 3"/>
    <property type="match status" value="1"/>
</dbReference>
<dbReference type="Pfam" id="PF02676">
    <property type="entry name" value="TYW3"/>
    <property type="match status" value="1"/>
</dbReference>
<dbReference type="SUPFAM" id="SSF111278">
    <property type="entry name" value="SSo0622-like"/>
    <property type="match status" value="1"/>
</dbReference>
<feature type="chain" id="PRO_0000281841" description="tRNA wybutosine-synthesizing protein 3 homolog">
    <location>
        <begin position="1"/>
        <end position="258"/>
    </location>
</feature>
<feature type="region of interest" description="Disordered" evidence="3">
    <location>
        <begin position="199"/>
        <end position="258"/>
    </location>
</feature>
<feature type="compositionally biased region" description="Basic residues" evidence="3">
    <location>
        <begin position="216"/>
        <end position="229"/>
    </location>
</feature>
<feature type="compositionally biased region" description="Basic and acidic residues" evidence="3">
    <location>
        <begin position="230"/>
        <end position="247"/>
    </location>
</feature>
<feature type="modified residue" description="Phosphoserine" evidence="2">
    <location>
        <position position="25"/>
    </location>
</feature>
<feature type="sequence conflict" description="In Ref. 2; AAI14026." evidence="4" ref="2">
    <original>L</original>
    <variation>Q</variation>
    <location>
        <position position="170"/>
    </location>
</feature>
<reference key="1">
    <citation type="journal article" date="2005" name="BMC Genomics">
        <title>Characterization of 954 bovine full-CDS cDNA sequences.</title>
        <authorList>
            <person name="Harhay G.P."/>
            <person name="Sonstegard T.S."/>
            <person name="Keele J.W."/>
            <person name="Heaton M.P."/>
            <person name="Clawson M.L."/>
            <person name="Snelling W.M."/>
            <person name="Wiedmann R.T."/>
            <person name="Van Tassell C.P."/>
            <person name="Smith T.P.L."/>
        </authorList>
    </citation>
    <scope>NUCLEOTIDE SEQUENCE [LARGE SCALE MRNA]</scope>
</reference>
<reference key="2">
    <citation type="submission" date="2006-02" db="EMBL/GenBank/DDBJ databases">
        <authorList>
            <consortium name="NIH - Mammalian Gene Collection (MGC) project"/>
        </authorList>
    </citation>
    <scope>NUCLEOTIDE SEQUENCE [LARGE SCALE MRNA]</scope>
    <source>
        <strain>Hereford</strain>
        <tissue>Testis</tissue>
    </source>
</reference>
<name>TYW3_BOVIN</name>